<evidence type="ECO:0000255" key="1">
    <source>
        <dbReference type="PROSITE-ProRule" id="PRU01234"/>
    </source>
</evidence>
<evidence type="ECO:0000256" key="2">
    <source>
        <dbReference type="SAM" id="MobiDB-lite"/>
    </source>
</evidence>
<evidence type="ECO:0000269" key="3">
    <source>
    </source>
</evidence>
<evidence type="ECO:0000269" key="4">
    <source>
    </source>
</evidence>
<evidence type="ECO:0000269" key="5">
    <source>
    </source>
</evidence>
<evidence type="ECO:0000305" key="6"/>
<evidence type="ECO:0007744" key="7">
    <source>
    </source>
</evidence>
<evidence type="ECO:0007744" key="8">
    <source>
    </source>
</evidence>
<gene>
    <name type="primary">OXR1</name>
    <name type="ordered locus">YPL196W</name>
</gene>
<accession>Q08952</accession>
<accession>D6W3H2</accession>
<keyword id="KW-0002">3D-structure</keyword>
<keyword id="KW-0007">Acetylation</keyword>
<keyword id="KW-0496">Mitochondrion</keyword>
<keyword id="KW-0597">Phosphoprotein</keyword>
<keyword id="KW-1185">Reference proteome</keyword>
<feature type="chain" id="PRO_0000058123" description="Oxidation resistance protein 1">
    <location>
        <begin position="1"/>
        <end position="273"/>
    </location>
</feature>
<feature type="domain" description="TLDc" evidence="1">
    <location>
        <begin position="74"/>
        <end position="273"/>
    </location>
</feature>
<feature type="region of interest" description="Disordered" evidence="2">
    <location>
        <begin position="18"/>
        <end position="48"/>
    </location>
</feature>
<feature type="region of interest" description="Disordered" evidence="2">
    <location>
        <begin position="177"/>
        <end position="197"/>
    </location>
</feature>
<feature type="compositionally biased region" description="Low complexity" evidence="2">
    <location>
        <begin position="18"/>
        <end position="33"/>
    </location>
</feature>
<feature type="compositionally biased region" description="Basic and acidic residues" evidence="2">
    <location>
        <begin position="37"/>
        <end position="48"/>
    </location>
</feature>
<feature type="modified residue" description="N-acetylmethionine" evidence="8">
    <location>
        <position position="1"/>
    </location>
</feature>
<feature type="modified residue" description="Phosphoserine" evidence="7">
    <location>
        <position position="178"/>
    </location>
</feature>
<name>OXR1_YEAST</name>
<reference key="1">
    <citation type="journal article" date="1997" name="Nature">
        <title>The nucleotide sequence of Saccharomyces cerevisiae chromosome XVI.</title>
        <authorList>
            <person name="Bussey H."/>
            <person name="Storms R.K."/>
            <person name="Ahmed A."/>
            <person name="Albermann K."/>
            <person name="Allen E."/>
            <person name="Ansorge W."/>
            <person name="Araujo R."/>
            <person name="Aparicio A."/>
            <person name="Barrell B.G."/>
            <person name="Badcock K."/>
            <person name="Benes V."/>
            <person name="Botstein D."/>
            <person name="Bowman S."/>
            <person name="Brueckner M."/>
            <person name="Carpenter J."/>
            <person name="Cherry J.M."/>
            <person name="Chung E."/>
            <person name="Churcher C.M."/>
            <person name="Coster F."/>
            <person name="Davis K."/>
            <person name="Davis R.W."/>
            <person name="Dietrich F.S."/>
            <person name="Delius H."/>
            <person name="DiPaolo T."/>
            <person name="Dubois E."/>
            <person name="Duesterhoeft A."/>
            <person name="Duncan M."/>
            <person name="Floeth M."/>
            <person name="Fortin N."/>
            <person name="Friesen J.D."/>
            <person name="Fritz C."/>
            <person name="Goffeau A."/>
            <person name="Hall J."/>
            <person name="Hebling U."/>
            <person name="Heumann K."/>
            <person name="Hilbert H."/>
            <person name="Hillier L.W."/>
            <person name="Hunicke-Smith S."/>
            <person name="Hyman R.W."/>
            <person name="Johnston M."/>
            <person name="Kalman S."/>
            <person name="Kleine K."/>
            <person name="Komp C."/>
            <person name="Kurdi O."/>
            <person name="Lashkari D."/>
            <person name="Lew H."/>
            <person name="Lin A."/>
            <person name="Lin D."/>
            <person name="Louis E.J."/>
            <person name="Marathe R."/>
            <person name="Messenguy F."/>
            <person name="Mewes H.-W."/>
            <person name="Mirtipati S."/>
            <person name="Moestl D."/>
            <person name="Mueller-Auer S."/>
            <person name="Namath A."/>
            <person name="Nentwich U."/>
            <person name="Oefner P."/>
            <person name="Pearson D."/>
            <person name="Petel F.X."/>
            <person name="Pohl T.M."/>
            <person name="Purnelle B."/>
            <person name="Rajandream M.A."/>
            <person name="Rechmann S."/>
            <person name="Rieger M."/>
            <person name="Riles L."/>
            <person name="Roberts D."/>
            <person name="Schaefer M."/>
            <person name="Scharfe M."/>
            <person name="Scherens B."/>
            <person name="Schramm S."/>
            <person name="Schroeder M."/>
            <person name="Sdicu A.-M."/>
            <person name="Tettelin H."/>
            <person name="Urrestarazu L.A."/>
            <person name="Ushinsky S."/>
            <person name="Vierendeels F."/>
            <person name="Vissers S."/>
            <person name="Voss H."/>
            <person name="Walsh S.V."/>
            <person name="Wambutt R."/>
            <person name="Wang Y."/>
            <person name="Wedler E."/>
            <person name="Wedler H."/>
            <person name="Winnett E."/>
            <person name="Zhong W.-W."/>
            <person name="Zollner A."/>
            <person name="Vo D.H."/>
            <person name="Hani J."/>
        </authorList>
    </citation>
    <scope>NUCLEOTIDE SEQUENCE [LARGE SCALE GENOMIC DNA]</scope>
    <source>
        <strain>ATCC 204508 / S288c</strain>
    </source>
</reference>
<reference key="2">
    <citation type="journal article" date="2014" name="G3 (Bethesda)">
        <title>The reference genome sequence of Saccharomyces cerevisiae: Then and now.</title>
        <authorList>
            <person name="Engel S.R."/>
            <person name="Dietrich F.S."/>
            <person name="Fisk D.G."/>
            <person name="Binkley G."/>
            <person name="Balakrishnan R."/>
            <person name="Costanzo M.C."/>
            <person name="Dwight S.S."/>
            <person name="Hitz B.C."/>
            <person name="Karra K."/>
            <person name="Nash R.S."/>
            <person name="Weng S."/>
            <person name="Wong E.D."/>
            <person name="Lloyd P."/>
            <person name="Skrzypek M.S."/>
            <person name="Miyasato S.R."/>
            <person name="Simison M."/>
            <person name="Cherry J.M."/>
        </authorList>
    </citation>
    <scope>GENOME REANNOTATION</scope>
    <source>
        <strain>ATCC 204508 / S288c</strain>
    </source>
</reference>
<reference key="3">
    <citation type="journal article" date="2000" name="Proc. Natl. Acad. Sci. U.S.A.">
        <title>Functional genomics reveals a family of eukaryotic oxidation protection genes.</title>
        <authorList>
            <person name="Volkert M.R."/>
            <person name="Elliott N.A."/>
            <person name="Housman D.E."/>
        </authorList>
    </citation>
    <scope>FUNCTION</scope>
</reference>
<reference key="4">
    <citation type="journal article" date="2003" name="Nature">
        <title>Global analysis of protein expression in yeast.</title>
        <authorList>
            <person name="Ghaemmaghami S."/>
            <person name="Huh W.-K."/>
            <person name="Bower K."/>
            <person name="Howson R.W."/>
            <person name="Belle A."/>
            <person name="Dephoure N."/>
            <person name="O'Shea E.K."/>
            <person name="Weissman J.S."/>
        </authorList>
    </citation>
    <scope>LEVEL OF PROTEIN EXPRESSION [LARGE SCALE ANALYSIS]</scope>
</reference>
<reference key="5">
    <citation type="journal article" date="2004" name="Mol. Cell. Biol.">
        <title>Stress induction and mitochondrial localization of Oxr1 proteins in yeast and humans.</title>
        <authorList>
            <person name="Elliott N.A."/>
            <person name="Volkert M.R."/>
        </authorList>
    </citation>
    <scope>FUNCTION</scope>
    <scope>SUBCELLULAR LOCATION</scope>
    <scope>INDUCTION</scope>
</reference>
<reference key="6">
    <citation type="journal article" date="2008" name="Mol. Cell. Proteomics">
        <title>A multidimensional chromatography technology for in-depth phosphoproteome analysis.</title>
        <authorList>
            <person name="Albuquerque C.P."/>
            <person name="Smolka M.B."/>
            <person name="Payne S.H."/>
            <person name="Bafna V."/>
            <person name="Eng J."/>
            <person name="Zhou H."/>
        </authorList>
    </citation>
    <scope>PHOSPHORYLATION [LARGE SCALE ANALYSIS] AT SER-178</scope>
    <scope>IDENTIFICATION BY MASS SPECTROMETRY [LARGE SCALE ANALYSIS]</scope>
</reference>
<reference key="7">
    <citation type="journal article" date="2012" name="Proc. Natl. Acad. Sci. U.S.A.">
        <title>N-terminal acetylome analyses and functional insights of the N-terminal acetyltransferase NatB.</title>
        <authorList>
            <person name="Van Damme P."/>
            <person name="Lasa M."/>
            <person name="Polevoda B."/>
            <person name="Gazquez C."/>
            <person name="Elosegui-Artola A."/>
            <person name="Kim D.S."/>
            <person name="De Juan-Pardo E."/>
            <person name="Demeyer K."/>
            <person name="Hole K."/>
            <person name="Larrea E."/>
            <person name="Timmerman E."/>
            <person name="Prieto J."/>
            <person name="Arnesen T."/>
            <person name="Sherman F."/>
            <person name="Gevaert K."/>
            <person name="Aldabe R."/>
        </authorList>
    </citation>
    <scope>ACETYLATION [LARGE SCALE ANALYSIS] AT MET-1</scope>
    <scope>IDENTIFICATION BY MASS SPECTROMETRY [LARGE SCALE ANALYSIS]</scope>
</reference>
<comment type="function">
    <text evidence="3 5">Involved in protection from oxidative damage.</text>
</comment>
<comment type="subcellular location">
    <subcellularLocation>
        <location evidence="5">Mitochondrion</location>
    </subcellularLocation>
</comment>
<comment type="induction">
    <text evidence="5">Up-regulated by heat and oxidative stress.</text>
</comment>
<comment type="miscellaneous">
    <text evidence="4">Present with 1560 molecules/cell in log phase SD medium.</text>
</comment>
<comment type="similarity">
    <text evidence="6">Belongs to the OXR1 family.</text>
</comment>
<sequence>MFGVKDAIFKIKRSIAGTDSSDSTAYTTASESSPQLKDSHNPFRNKTTSERTIVEEGSLPPVRLNGYLPSTKNKLLTPEMCDEIRTLMPTRIQLYTEWNLLYSLEQHGSSLHSLYSNVAPDSKEFRRVGYVLVIKDRKNGIFGAYSNEAFHPNEHRQYTGNGECFLWKLDKVPDVNISEKEESEQEGKEGKEEGDKEERWRFSGYPYTGVNEFAIYCTSEFLSMGAGDGHYGLLCDDGLLHGVSNPCQTYGNEVLSKEGKKFSIVALEVWRVG</sequence>
<protein>
    <recommendedName>
        <fullName>Oxidation resistance protein 1</fullName>
    </recommendedName>
</protein>
<organism>
    <name type="scientific">Saccharomyces cerevisiae (strain ATCC 204508 / S288c)</name>
    <name type="common">Baker's yeast</name>
    <dbReference type="NCBI Taxonomy" id="559292"/>
    <lineage>
        <taxon>Eukaryota</taxon>
        <taxon>Fungi</taxon>
        <taxon>Dikarya</taxon>
        <taxon>Ascomycota</taxon>
        <taxon>Saccharomycotina</taxon>
        <taxon>Saccharomycetes</taxon>
        <taxon>Saccharomycetales</taxon>
        <taxon>Saccharomycetaceae</taxon>
        <taxon>Saccharomyces</taxon>
    </lineage>
</organism>
<dbReference type="EMBL" id="Z73552">
    <property type="protein sequence ID" value="CAA97909.1"/>
    <property type="molecule type" value="Genomic_DNA"/>
</dbReference>
<dbReference type="EMBL" id="BK006949">
    <property type="protein sequence ID" value="DAA11238.1"/>
    <property type="molecule type" value="Genomic_DNA"/>
</dbReference>
<dbReference type="PIR" id="S65215">
    <property type="entry name" value="S65215"/>
</dbReference>
<dbReference type="RefSeq" id="NP_015128.1">
    <property type="nucleotide sequence ID" value="NM_001184010.1"/>
</dbReference>
<dbReference type="PDB" id="7FDE">
    <property type="method" value="EM"/>
    <property type="resolution" value="3.80 A"/>
    <property type="chains" value="P=1-273"/>
</dbReference>
<dbReference type="PDBsum" id="7FDE"/>
<dbReference type="EMDB" id="EMD-31541"/>
<dbReference type="SMR" id="Q08952"/>
<dbReference type="BioGRID" id="35987">
    <property type="interactions" value="87"/>
</dbReference>
<dbReference type="DIP" id="DIP-3976N"/>
<dbReference type="FunCoup" id="Q08952">
    <property type="interactions" value="44"/>
</dbReference>
<dbReference type="IntAct" id="Q08952">
    <property type="interactions" value="3"/>
</dbReference>
<dbReference type="STRING" id="4932.YPL196W"/>
<dbReference type="iPTMnet" id="Q08952"/>
<dbReference type="PaxDb" id="4932-YPL196W"/>
<dbReference type="PeptideAtlas" id="Q08952"/>
<dbReference type="TopDownProteomics" id="Q08952"/>
<dbReference type="EnsemblFungi" id="YPL196W_mRNA">
    <property type="protein sequence ID" value="YPL196W"/>
    <property type="gene ID" value="YPL196W"/>
</dbReference>
<dbReference type="GeneID" id="855905"/>
<dbReference type="KEGG" id="sce:YPL196W"/>
<dbReference type="AGR" id="SGD:S000006117"/>
<dbReference type="SGD" id="S000006117">
    <property type="gene designation" value="OXR1"/>
</dbReference>
<dbReference type="VEuPathDB" id="FungiDB:YPL196W"/>
<dbReference type="eggNOG" id="KOG2372">
    <property type="taxonomic scope" value="Eukaryota"/>
</dbReference>
<dbReference type="GeneTree" id="ENSGT00940000167904"/>
<dbReference type="HOGENOM" id="CLU_029204_0_0_1"/>
<dbReference type="InParanoid" id="Q08952"/>
<dbReference type="OMA" id="HYGLWCD"/>
<dbReference type="OrthoDB" id="26679at2759"/>
<dbReference type="BioCyc" id="YEAST:G3O-34089-MONOMER"/>
<dbReference type="BioGRID-ORCS" id="855905">
    <property type="hits" value="0 hits in 10 CRISPR screens"/>
</dbReference>
<dbReference type="PRO" id="PR:Q08952"/>
<dbReference type="Proteomes" id="UP000002311">
    <property type="component" value="Chromosome XVI"/>
</dbReference>
<dbReference type="RNAct" id="Q08952">
    <property type="molecule type" value="protein"/>
</dbReference>
<dbReference type="GO" id="GO:0005737">
    <property type="term" value="C:cytoplasm"/>
    <property type="evidence" value="ECO:0000314"/>
    <property type="project" value="SGD"/>
</dbReference>
<dbReference type="GO" id="GO:0005739">
    <property type="term" value="C:mitochondrion"/>
    <property type="evidence" value="ECO:0000314"/>
    <property type="project" value="SGD"/>
</dbReference>
<dbReference type="GO" id="GO:0005634">
    <property type="term" value="C:nucleus"/>
    <property type="evidence" value="ECO:0000318"/>
    <property type="project" value="GO_Central"/>
</dbReference>
<dbReference type="GO" id="GO:0045053">
    <property type="term" value="P:protein retention in Golgi apparatus"/>
    <property type="evidence" value="ECO:0000315"/>
    <property type="project" value="SGD"/>
</dbReference>
<dbReference type="GO" id="GO:0032984">
    <property type="term" value="P:protein-containing complex disassembly"/>
    <property type="evidence" value="ECO:0000314"/>
    <property type="project" value="SGD"/>
</dbReference>
<dbReference type="GO" id="GO:0006979">
    <property type="term" value="P:response to oxidative stress"/>
    <property type="evidence" value="ECO:0000318"/>
    <property type="project" value="GO_Central"/>
</dbReference>
<dbReference type="InterPro" id="IPR006571">
    <property type="entry name" value="TLDc_dom"/>
</dbReference>
<dbReference type="PANTHER" id="PTHR23354:SF62">
    <property type="entry name" value="MUSTARD, ISOFORM V"/>
    <property type="match status" value="1"/>
</dbReference>
<dbReference type="PANTHER" id="PTHR23354">
    <property type="entry name" value="NUCLEOLAR PROTEIN 7/ESTROGEN RECEPTOR COACTIVATOR-RELATED"/>
    <property type="match status" value="1"/>
</dbReference>
<dbReference type="Pfam" id="PF07534">
    <property type="entry name" value="TLD"/>
    <property type="match status" value="2"/>
</dbReference>
<dbReference type="SMART" id="SM00584">
    <property type="entry name" value="TLDc"/>
    <property type="match status" value="1"/>
</dbReference>
<dbReference type="PROSITE" id="PS51886">
    <property type="entry name" value="TLDC"/>
    <property type="match status" value="1"/>
</dbReference>
<proteinExistence type="evidence at protein level"/>